<organism>
    <name type="scientific">Methylococcus capsulatus (strain ATCC 33009 / NCIMB 11132 / Bath)</name>
    <dbReference type="NCBI Taxonomy" id="243233"/>
    <lineage>
        <taxon>Bacteria</taxon>
        <taxon>Pseudomonadati</taxon>
        <taxon>Pseudomonadota</taxon>
        <taxon>Gammaproteobacteria</taxon>
        <taxon>Methylococcales</taxon>
        <taxon>Methylococcaceae</taxon>
        <taxon>Methylococcus</taxon>
    </lineage>
</organism>
<name>LNT_METCA</name>
<gene>
    <name evidence="1" type="primary">lnt</name>
    <name type="ordered locus">MCA1455</name>
</gene>
<feature type="chain" id="PRO_1000137479" description="Apolipoprotein N-acyltransferase">
    <location>
        <begin position="1"/>
        <end position="504"/>
    </location>
</feature>
<feature type="transmembrane region" description="Helical" evidence="1">
    <location>
        <begin position="6"/>
        <end position="26"/>
    </location>
</feature>
<feature type="transmembrane region" description="Helical" evidence="1">
    <location>
        <begin position="47"/>
        <end position="67"/>
    </location>
</feature>
<feature type="transmembrane region" description="Helical" evidence="1">
    <location>
        <begin position="83"/>
        <end position="103"/>
    </location>
</feature>
<feature type="transmembrane region" description="Helical" evidence="1">
    <location>
        <begin position="105"/>
        <end position="125"/>
    </location>
</feature>
<feature type="transmembrane region" description="Helical" evidence="1">
    <location>
        <begin position="153"/>
        <end position="173"/>
    </location>
</feature>
<feature type="transmembrane region" description="Helical" evidence="1">
    <location>
        <begin position="186"/>
        <end position="206"/>
    </location>
</feature>
<feature type="transmembrane region" description="Helical" evidence="1">
    <location>
        <begin position="465"/>
        <end position="485"/>
    </location>
</feature>
<feature type="domain" description="CN hydrolase" evidence="1">
    <location>
        <begin position="219"/>
        <end position="457"/>
    </location>
</feature>
<feature type="active site" description="Proton acceptor" evidence="1">
    <location>
        <position position="258"/>
    </location>
</feature>
<feature type="active site" evidence="1">
    <location>
        <position position="317"/>
    </location>
</feature>
<feature type="active site" description="Nucleophile" evidence="1">
    <location>
        <position position="369"/>
    </location>
</feature>
<sequence length="504" mass="55064">MKAMLLALTGGILLPFAFAPFGYALVAPLSLALLFRVWLNASPSKAALYGYLFGLGQFGIGVSWVFVSMYEYGGSDVFSAAGLTALFVAYLALFPALAGWLGVKAGGGSILVRTLLVFPAAWVVTEWLRGWLFSGFPWLQIGYSQTDTGLRSIAPVFGVFGVGWLLAVLAGLLLSAWLLDRRGRRFALLGAAVVLVGSTQFAKVQWTHPAGDPIRVTLLQGNVPQDQKWRPEAKTTTVQMYVDMTRQHWDSRLIIWPETAVPAFYQQVAESFLAPLEAEARQHGVDVLVGVPYYEAQGNRYYNALVTLGAKPGRYFKRHLVPFGEFLPLRPVLAFVLDILQIPLADFTAGAHRQTLLQAAGYPLIASICYEDIFGQESLTGLPEGAYLVNVTNDAWFGDSFAPHQHWQKARMRALETGRYMLRATNTGVTGIIDAGGRPVAVAPMFEREALTGMMQPMAGATPYALWGDWPAIGLCAGIVGICFARRRRNASSHQGRQAEPGRN</sequence>
<reference key="1">
    <citation type="journal article" date="2004" name="PLoS Biol.">
        <title>Genomic insights into methanotrophy: the complete genome sequence of Methylococcus capsulatus (Bath).</title>
        <authorList>
            <person name="Ward N.L."/>
            <person name="Larsen O."/>
            <person name="Sakwa J."/>
            <person name="Bruseth L."/>
            <person name="Khouri H.M."/>
            <person name="Durkin A.S."/>
            <person name="Dimitrov G."/>
            <person name="Jiang L."/>
            <person name="Scanlan D."/>
            <person name="Kang K.H."/>
            <person name="Lewis M.R."/>
            <person name="Nelson K.E."/>
            <person name="Methe B.A."/>
            <person name="Wu M."/>
            <person name="Heidelberg J.F."/>
            <person name="Paulsen I.T."/>
            <person name="Fouts D.E."/>
            <person name="Ravel J."/>
            <person name="Tettelin H."/>
            <person name="Ren Q."/>
            <person name="Read T.D."/>
            <person name="DeBoy R.T."/>
            <person name="Seshadri R."/>
            <person name="Salzberg S.L."/>
            <person name="Jensen H.B."/>
            <person name="Birkeland N.K."/>
            <person name="Nelson W.C."/>
            <person name="Dodson R.J."/>
            <person name="Grindhaug S.H."/>
            <person name="Holt I.E."/>
            <person name="Eidhammer I."/>
            <person name="Jonasen I."/>
            <person name="Vanaken S."/>
            <person name="Utterback T.R."/>
            <person name="Feldblyum T.V."/>
            <person name="Fraser C.M."/>
            <person name="Lillehaug J.R."/>
            <person name="Eisen J.A."/>
        </authorList>
    </citation>
    <scope>NUCLEOTIDE SEQUENCE [LARGE SCALE GENOMIC DNA]</scope>
    <source>
        <strain>ATCC 33009 / NCIMB 11132 / Bath</strain>
    </source>
</reference>
<evidence type="ECO:0000255" key="1">
    <source>
        <dbReference type="HAMAP-Rule" id="MF_01148"/>
    </source>
</evidence>
<dbReference type="EC" id="2.3.1.269" evidence="1"/>
<dbReference type="EMBL" id="AE017282">
    <property type="protein sequence ID" value="AAU92545.1"/>
    <property type="molecule type" value="Genomic_DNA"/>
</dbReference>
<dbReference type="RefSeq" id="WP_010960731.1">
    <property type="nucleotide sequence ID" value="NC_002977.6"/>
</dbReference>
<dbReference type="SMR" id="Q608N5"/>
<dbReference type="STRING" id="243233.MCA1455"/>
<dbReference type="GeneID" id="88223728"/>
<dbReference type="KEGG" id="mca:MCA1455"/>
<dbReference type="eggNOG" id="COG0815">
    <property type="taxonomic scope" value="Bacteria"/>
</dbReference>
<dbReference type="HOGENOM" id="CLU_019563_3_0_6"/>
<dbReference type="UniPathway" id="UPA00666"/>
<dbReference type="Proteomes" id="UP000006821">
    <property type="component" value="Chromosome"/>
</dbReference>
<dbReference type="GO" id="GO:0005886">
    <property type="term" value="C:plasma membrane"/>
    <property type="evidence" value="ECO:0007669"/>
    <property type="project" value="UniProtKB-SubCell"/>
</dbReference>
<dbReference type="GO" id="GO:0016410">
    <property type="term" value="F:N-acyltransferase activity"/>
    <property type="evidence" value="ECO:0007669"/>
    <property type="project" value="UniProtKB-UniRule"/>
</dbReference>
<dbReference type="GO" id="GO:0042158">
    <property type="term" value="P:lipoprotein biosynthetic process"/>
    <property type="evidence" value="ECO:0007669"/>
    <property type="project" value="UniProtKB-UniRule"/>
</dbReference>
<dbReference type="CDD" id="cd07571">
    <property type="entry name" value="ALP_N-acyl_transferase"/>
    <property type="match status" value="1"/>
</dbReference>
<dbReference type="Gene3D" id="3.60.110.10">
    <property type="entry name" value="Carbon-nitrogen hydrolase"/>
    <property type="match status" value="1"/>
</dbReference>
<dbReference type="HAMAP" id="MF_01148">
    <property type="entry name" value="Lnt"/>
    <property type="match status" value="1"/>
</dbReference>
<dbReference type="InterPro" id="IPR004563">
    <property type="entry name" value="Apolipo_AcylTrfase"/>
</dbReference>
<dbReference type="InterPro" id="IPR003010">
    <property type="entry name" value="C-N_Hydrolase"/>
</dbReference>
<dbReference type="InterPro" id="IPR036526">
    <property type="entry name" value="C-N_Hydrolase_sf"/>
</dbReference>
<dbReference type="InterPro" id="IPR045378">
    <property type="entry name" value="LNT_N"/>
</dbReference>
<dbReference type="NCBIfam" id="TIGR00546">
    <property type="entry name" value="lnt"/>
    <property type="match status" value="1"/>
</dbReference>
<dbReference type="PANTHER" id="PTHR38686">
    <property type="entry name" value="APOLIPOPROTEIN N-ACYLTRANSFERASE"/>
    <property type="match status" value="1"/>
</dbReference>
<dbReference type="PANTHER" id="PTHR38686:SF1">
    <property type="entry name" value="APOLIPOPROTEIN N-ACYLTRANSFERASE"/>
    <property type="match status" value="1"/>
</dbReference>
<dbReference type="Pfam" id="PF00795">
    <property type="entry name" value="CN_hydrolase"/>
    <property type="match status" value="1"/>
</dbReference>
<dbReference type="Pfam" id="PF20154">
    <property type="entry name" value="LNT_N"/>
    <property type="match status" value="1"/>
</dbReference>
<dbReference type="SUPFAM" id="SSF56317">
    <property type="entry name" value="Carbon-nitrogen hydrolase"/>
    <property type="match status" value="1"/>
</dbReference>
<dbReference type="PROSITE" id="PS50263">
    <property type="entry name" value="CN_HYDROLASE"/>
    <property type="match status" value="1"/>
</dbReference>
<keyword id="KW-0012">Acyltransferase</keyword>
<keyword id="KW-0997">Cell inner membrane</keyword>
<keyword id="KW-1003">Cell membrane</keyword>
<keyword id="KW-0472">Membrane</keyword>
<keyword id="KW-1185">Reference proteome</keyword>
<keyword id="KW-0808">Transferase</keyword>
<keyword id="KW-0812">Transmembrane</keyword>
<keyword id="KW-1133">Transmembrane helix</keyword>
<accession>Q608N5</accession>
<protein>
    <recommendedName>
        <fullName evidence="1">Apolipoprotein N-acyltransferase</fullName>
        <shortName evidence="1">ALP N-acyltransferase</shortName>
        <ecNumber evidence="1">2.3.1.269</ecNumber>
    </recommendedName>
</protein>
<proteinExistence type="inferred from homology"/>
<comment type="function">
    <text evidence="1">Catalyzes the phospholipid dependent N-acylation of the N-terminal cysteine of apolipoprotein, the last step in lipoprotein maturation.</text>
</comment>
<comment type="catalytic activity">
    <reaction evidence="1">
        <text>N-terminal S-1,2-diacyl-sn-glyceryl-L-cysteinyl-[lipoprotein] + a glycerophospholipid = N-acyl-S-1,2-diacyl-sn-glyceryl-L-cysteinyl-[lipoprotein] + a 2-acyl-sn-glycero-3-phospholipid + H(+)</text>
        <dbReference type="Rhea" id="RHEA:48228"/>
        <dbReference type="Rhea" id="RHEA-COMP:14681"/>
        <dbReference type="Rhea" id="RHEA-COMP:14684"/>
        <dbReference type="ChEBI" id="CHEBI:15378"/>
        <dbReference type="ChEBI" id="CHEBI:136912"/>
        <dbReference type="ChEBI" id="CHEBI:140656"/>
        <dbReference type="ChEBI" id="CHEBI:140657"/>
        <dbReference type="ChEBI" id="CHEBI:140660"/>
        <dbReference type="EC" id="2.3.1.269"/>
    </reaction>
</comment>
<comment type="pathway">
    <text evidence="1">Protein modification; lipoprotein biosynthesis (N-acyl transfer).</text>
</comment>
<comment type="subcellular location">
    <subcellularLocation>
        <location evidence="1">Cell inner membrane</location>
        <topology evidence="1">Multi-pass membrane protein</topology>
    </subcellularLocation>
</comment>
<comment type="similarity">
    <text evidence="1">Belongs to the CN hydrolase family. Apolipoprotein N-acyltransferase subfamily.</text>
</comment>